<name>HIS1_DEBHA</name>
<comment type="function">
    <text evidence="1">Catalyzes the condensation of ATP and 5-phosphoribose 1-diphosphate to form N'-(5'-phosphoribosyl)-ATP (PR-ATP). Has a crucial role in the pathway because the rate of histidine biosynthesis seems to be controlled primarily by regulation of the enzymatic activity (By similarity).</text>
</comment>
<comment type="catalytic activity">
    <reaction>
        <text>1-(5-phospho-beta-D-ribosyl)-ATP + diphosphate = 5-phospho-alpha-D-ribose 1-diphosphate + ATP</text>
        <dbReference type="Rhea" id="RHEA:18473"/>
        <dbReference type="ChEBI" id="CHEBI:30616"/>
        <dbReference type="ChEBI" id="CHEBI:33019"/>
        <dbReference type="ChEBI" id="CHEBI:58017"/>
        <dbReference type="ChEBI" id="CHEBI:73183"/>
        <dbReference type="EC" id="2.4.2.17"/>
    </reaction>
</comment>
<comment type="pathway">
    <text>Amino-acid biosynthesis; L-histidine biosynthesis; L-histidine from 5-phospho-alpha-D-ribose 1-diphosphate: step 1/9.</text>
</comment>
<comment type="subcellular location">
    <subcellularLocation>
        <location evidence="1">Cytoplasm</location>
    </subcellularLocation>
</comment>
<comment type="similarity">
    <text evidence="2">Belongs to the ATP phosphoribosyltransferase family.</text>
</comment>
<evidence type="ECO:0000250" key="1"/>
<evidence type="ECO:0000305" key="2"/>
<reference key="1">
    <citation type="journal article" date="2004" name="Nature">
        <title>Genome evolution in yeasts.</title>
        <authorList>
            <person name="Dujon B."/>
            <person name="Sherman D."/>
            <person name="Fischer G."/>
            <person name="Durrens P."/>
            <person name="Casaregola S."/>
            <person name="Lafontaine I."/>
            <person name="de Montigny J."/>
            <person name="Marck C."/>
            <person name="Neuveglise C."/>
            <person name="Talla E."/>
            <person name="Goffard N."/>
            <person name="Frangeul L."/>
            <person name="Aigle M."/>
            <person name="Anthouard V."/>
            <person name="Babour A."/>
            <person name="Barbe V."/>
            <person name="Barnay S."/>
            <person name="Blanchin S."/>
            <person name="Beckerich J.-M."/>
            <person name="Beyne E."/>
            <person name="Bleykasten C."/>
            <person name="Boisrame A."/>
            <person name="Boyer J."/>
            <person name="Cattolico L."/>
            <person name="Confanioleri F."/>
            <person name="de Daruvar A."/>
            <person name="Despons L."/>
            <person name="Fabre E."/>
            <person name="Fairhead C."/>
            <person name="Ferry-Dumazet H."/>
            <person name="Groppi A."/>
            <person name="Hantraye F."/>
            <person name="Hennequin C."/>
            <person name="Jauniaux N."/>
            <person name="Joyet P."/>
            <person name="Kachouri R."/>
            <person name="Kerrest A."/>
            <person name="Koszul R."/>
            <person name="Lemaire M."/>
            <person name="Lesur I."/>
            <person name="Ma L."/>
            <person name="Muller H."/>
            <person name="Nicaud J.-M."/>
            <person name="Nikolski M."/>
            <person name="Oztas S."/>
            <person name="Ozier-Kalogeropoulos O."/>
            <person name="Pellenz S."/>
            <person name="Potier S."/>
            <person name="Richard G.-F."/>
            <person name="Straub M.-L."/>
            <person name="Suleau A."/>
            <person name="Swennen D."/>
            <person name="Tekaia F."/>
            <person name="Wesolowski-Louvel M."/>
            <person name="Westhof E."/>
            <person name="Wirth B."/>
            <person name="Zeniou-Meyer M."/>
            <person name="Zivanovic Y."/>
            <person name="Bolotin-Fukuhara M."/>
            <person name="Thierry A."/>
            <person name="Bouchier C."/>
            <person name="Caudron B."/>
            <person name="Scarpelli C."/>
            <person name="Gaillardin C."/>
            <person name="Weissenbach J."/>
            <person name="Wincker P."/>
            <person name="Souciet J.-L."/>
        </authorList>
    </citation>
    <scope>NUCLEOTIDE SEQUENCE [LARGE SCALE GENOMIC DNA]</scope>
    <source>
        <strain>ATCC 36239 / CBS 767 / BCRC 21394 / JCM 1990 / NBRC 0083 / IGC 2968</strain>
    </source>
</reference>
<gene>
    <name type="primary">HIS1</name>
    <name type="ordered locus">DEHA2D13772g</name>
</gene>
<accession>Q6BRU4</accession>
<feature type="chain" id="PRO_0000151954" description="ATP phosphoribosyltransferase">
    <location>
        <begin position="1"/>
        <end position="304"/>
    </location>
</feature>
<keyword id="KW-0028">Amino-acid biosynthesis</keyword>
<keyword id="KW-0067">ATP-binding</keyword>
<keyword id="KW-0963">Cytoplasm</keyword>
<keyword id="KW-0328">Glycosyltransferase</keyword>
<keyword id="KW-0368">Histidine biosynthesis</keyword>
<keyword id="KW-0547">Nucleotide-binding</keyword>
<keyword id="KW-1185">Reference proteome</keyword>
<keyword id="KW-0808">Transferase</keyword>
<protein>
    <recommendedName>
        <fullName>ATP phosphoribosyltransferase</fullName>
        <shortName>ATP-PRT</shortName>
        <shortName>ATP-PRTase</shortName>
        <ecNumber>2.4.2.17</ecNumber>
    </recommendedName>
</protein>
<sequence length="304" mass="33324">MDLVNHLPDRLLFAVPKKGRLYEKCCSLLKGVDIQFRRSNRLDIAISTNLPIALIFLPAADIPIFVGEGNCDLGITGLDQIKEADMFNSVEDLLDLQFGSCKLQIQVPAEGEITKPEQLVGKKIVSSFTKLSVDYFKTLENVEDETKLSTSIRYVGGSVEASCALGVADAIVDLVESGETMKAAGLTAIETILQTSAHLISSKKPKFPELVERIHQRFEGLMAAQKYVLCNYNAPRSILSAVLQITPGRRSATISALEKKSDENEEWVAVSSMVEKKKISDIMDDLKKAGASDILVFDIGNCRV</sequence>
<proteinExistence type="inferred from homology"/>
<dbReference type="EC" id="2.4.2.17"/>
<dbReference type="EMBL" id="CR382136">
    <property type="protein sequence ID" value="CAG87244.1"/>
    <property type="molecule type" value="Genomic_DNA"/>
</dbReference>
<dbReference type="RefSeq" id="XP_459076.1">
    <property type="nucleotide sequence ID" value="XM_459076.1"/>
</dbReference>
<dbReference type="SMR" id="Q6BRU4"/>
<dbReference type="FunCoup" id="Q6BRU4">
    <property type="interactions" value="212"/>
</dbReference>
<dbReference type="STRING" id="284592.Q6BRU4"/>
<dbReference type="GeneID" id="2901673"/>
<dbReference type="KEGG" id="dha:DEHA2D13772g"/>
<dbReference type="VEuPathDB" id="FungiDB:DEHA2D13772g"/>
<dbReference type="eggNOG" id="KOG2831">
    <property type="taxonomic scope" value="Eukaryota"/>
</dbReference>
<dbReference type="HOGENOM" id="CLU_038115_1_2_1"/>
<dbReference type="InParanoid" id="Q6BRU4"/>
<dbReference type="OMA" id="YVMMDYD"/>
<dbReference type="OrthoDB" id="2574at2759"/>
<dbReference type="UniPathway" id="UPA00031">
    <property type="reaction ID" value="UER00006"/>
</dbReference>
<dbReference type="Proteomes" id="UP000000599">
    <property type="component" value="Chromosome D"/>
</dbReference>
<dbReference type="GO" id="GO:0005737">
    <property type="term" value="C:cytoplasm"/>
    <property type="evidence" value="ECO:0007669"/>
    <property type="project" value="UniProtKB-SubCell"/>
</dbReference>
<dbReference type="GO" id="GO:0005524">
    <property type="term" value="F:ATP binding"/>
    <property type="evidence" value="ECO:0007669"/>
    <property type="project" value="UniProtKB-KW"/>
</dbReference>
<dbReference type="GO" id="GO:0003879">
    <property type="term" value="F:ATP phosphoribosyltransferase activity"/>
    <property type="evidence" value="ECO:0007669"/>
    <property type="project" value="UniProtKB-EC"/>
</dbReference>
<dbReference type="GO" id="GO:0000287">
    <property type="term" value="F:magnesium ion binding"/>
    <property type="evidence" value="ECO:0007669"/>
    <property type="project" value="InterPro"/>
</dbReference>
<dbReference type="GO" id="GO:0000105">
    <property type="term" value="P:L-histidine biosynthetic process"/>
    <property type="evidence" value="ECO:0007669"/>
    <property type="project" value="UniProtKB-UniPathway"/>
</dbReference>
<dbReference type="FunFam" id="3.30.70.120:FF:000003">
    <property type="entry name" value="ATP phosphoribosyltransferase"/>
    <property type="match status" value="1"/>
</dbReference>
<dbReference type="FunFam" id="3.40.190.10:FF:000123">
    <property type="entry name" value="HIS1p ATP phosphoribosyltransferase"/>
    <property type="match status" value="1"/>
</dbReference>
<dbReference type="Gene3D" id="3.30.70.120">
    <property type="match status" value="1"/>
</dbReference>
<dbReference type="Gene3D" id="3.40.190.10">
    <property type="entry name" value="Periplasmic binding protein-like II"/>
    <property type="match status" value="2"/>
</dbReference>
<dbReference type="HAMAP" id="MF_00079">
    <property type="entry name" value="HisG_Long"/>
    <property type="match status" value="1"/>
</dbReference>
<dbReference type="InterPro" id="IPR020621">
    <property type="entry name" value="ATP-PRT_HisG_long"/>
</dbReference>
<dbReference type="InterPro" id="IPR013820">
    <property type="entry name" value="ATP_PRibTrfase_cat"/>
</dbReference>
<dbReference type="InterPro" id="IPR018198">
    <property type="entry name" value="ATP_PRibTrfase_CS"/>
</dbReference>
<dbReference type="InterPro" id="IPR001348">
    <property type="entry name" value="ATP_PRibTrfase_HisG"/>
</dbReference>
<dbReference type="InterPro" id="IPR013115">
    <property type="entry name" value="HisG_C"/>
</dbReference>
<dbReference type="InterPro" id="IPR011322">
    <property type="entry name" value="N-reg_PII-like_a/b"/>
</dbReference>
<dbReference type="InterPro" id="IPR015867">
    <property type="entry name" value="N-reg_PII/ATP_PRibTrfase_C"/>
</dbReference>
<dbReference type="NCBIfam" id="TIGR00070">
    <property type="entry name" value="hisG"/>
    <property type="match status" value="1"/>
</dbReference>
<dbReference type="NCBIfam" id="TIGR03455">
    <property type="entry name" value="HisG_C-term"/>
    <property type="match status" value="1"/>
</dbReference>
<dbReference type="PANTHER" id="PTHR21403:SF8">
    <property type="entry name" value="ATP PHOSPHORIBOSYLTRANSFERASE"/>
    <property type="match status" value="1"/>
</dbReference>
<dbReference type="PANTHER" id="PTHR21403">
    <property type="entry name" value="ATP PHOSPHORIBOSYLTRANSFERASE ATP-PRTASE"/>
    <property type="match status" value="1"/>
</dbReference>
<dbReference type="Pfam" id="PF01634">
    <property type="entry name" value="HisG"/>
    <property type="match status" value="1"/>
</dbReference>
<dbReference type="Pfam" id="PF08029">
    <property type="entry name" value="HisG_C"/>
    <property type="match status" value="1"/>
</dbReference>
<dbReference type="SUPFAM" id="SSF54913">
    <property type="entry name" value="GlnB-like"/>
    <property type="match status" value="1"/>
</dbReference>
<dbReference type="SUPFAM" id="SSF53850">
    <property type="entry name" value="Periplasmic binding protein-like II"/>
    <property type="match status" value="1"/>
</dbReference>
<dbReference type="PROSITE" id="PS01316">
    <property type="entry name" value="ATP_P_PHORIBOSYLTR"/>
    <property type="match status" value="1"/>
</dbReference>
<organism>
    <name type="scientific">Debaryomyces hansenii (strain ATCC 36239 / CBS 767 / BCRC 21394 / JCM 1990 / NBRC 0083 / IGC 2968)</name>
    <name type="common">Yeast</name>
    <name type="synonym">Torulaspora hansenii</name>
    <dbReference type="NCBI Taxonomy" id="284592"/>
    <lineage>
        <taxon>Eukaryota</taxon>
        <taxon>Fungi</taxon>
        <taxon>Dikarya</taxon>
        <taxon>Ascomycota</taxon>
        <taxon>Saccharomycotina</taxon>
        <taxon>Pichiomycetes</taxon>
        <taxon>Debaryomycetaceae</taxon>
        <taxon>Debaryomyces</taxon>
    </lineage>
</organism>